<feature type="chain" id="PRO_0000209146" description="Putative transferase YhbX">
    <location>
        <begin position="1"/>
        <end position="541"/>
    </location>
</feature>
<feature type="topological domain" description="Periplasmic" evidence="5">
    <location>
        <begin position="1"/>
        <end position="60"/>
    </location>
</feature>
<feature type="transmembrane region" description="Helical" evidence="2">
    <location>
        <begin position="61"/>
        <end position="81"/>
    </location>
</feature>
<feature type="topological domain" description="Cytoplasmic" evidence="2">
    <location>
        <begin position="82"/>
        <end position="110"/>
    </location>
</feature>
<feature type="transmembrane region" description="Helical" evidence="2">
    <location>
        <begin position="111"/>
        <end position="131"/>
    </location>
</feature>
<feature type="topological domain" description="Periplasmic" evidence="2">
    <location>
        <begin position="132"/>
        <end position="141"/>
    </location>
</feature>
<feature type="transmembrane region" description="Helical" evidence="2">
    <location>
        <begin position="142"/>
        <end position="162"/>
    </location>
</feature>
<feature type="topological domain" description="Cytoplasmic" evidence="2">
    <location>
        <begin position="163"/>
        <end position="264"/>
    </location>
</feature>
<feature type="transmembrane region" description="Helical" evidence="2">
    <location>
        <begin position="265"/>
        <end position="285"/>
    </location>
</feature>
<feature type="topological domain" description="Periplasmic" evidence="2">
    <location>
        <begin position="286"/>
        <end position="541"/>
    </location>
</feature>
<proteinExistence type="evidence at protein level"/>
<organism>
    <name type="scientific">Escherichia coli (strain K12)</name>
    <dbReference type="NCBI Taxonomy" id="83333"/>
    <lineage>
        <taxon>Bacteria</taxon>
        <taxon>Pseudomonadati</taxon>
        <taxon>Pseudomonadota</taxon>
        <taxon>Gammaproteobacteria</taxon>
        <taxon>Enterobacterales</taxon>
        <taxon>Enterobacteriaceae</taxon>
        <taxon>Escherichia</taxon>
    </lineage>
</organism>
<evidence type="ECO:0000250" key="1">
    <source>
        <dbReference type="UniProtKB" id="P58216"/>
    </source>
</evidence>
<evidence type="ECO:0000255" key="2"/>
<evidence type="ECO:0000269" key="3">
    <source>
    </source>
</evidence>
<evidence type="ECO:0000305" key="4"/>
<evidence type="ECO:0000305" key="5">
    <source>
    </source>
</evidence>
<accession>P42640</accession>
<accession>Q2M938</accession>
<accession>Q46994</accession>
<gene>
    <name type="primary">yhbX</name>
    <name type="ordered locus">b3173</name>
    <name type="ordered locus">JW5534</name>
</gene>
<sequence length="541" mass="60753">MTVFNKFARTFKSHWLLYLCVIVFGITNLVASSGAHMVQRLLFFVLTILVVKRISSLPLRLLVAAPFVLLTAADMSISLYSWCTFGTTFNDGFAISVLQSDPDEVVKMLGMYIPYLCAFAFLSLLFLAVIIKYDVSLPTKKVTGILLLIVISGSLFSACQFAYKDAKNKKAFSPYILASRFATYTPFFNLNYFALAAKEHQRLLSIANTVPYFQLSVRDTGIDTYVLIVGESVRVDNMSLYGYTRSTTPQVEAQRKQIKLFNQAISGAPYTALSVPLSLTADSVLSHDIHNYPDNIINMANQAGFQTFWLSSQSAFRQNGTAVTSIAMRAMETVYVRGFDELLLPHLSQALQQNTQQKKLIVLHLNGSHEPACSAYPQSSAVFQPQDDQDACYDNSIHYTDSLLGQVFELLKDRRASVMYFADHGLERDPTKKNVYFHGGREASQQAYHVPMFIWYSPVLGDGVDRTTENNIFSTAYNNYLINAWMGVTKPEQPQTLEEVIAHYKGDSRVVDANHDVFDYVMLRKEFTEDKQGNPTPEGQG</sequence>
<dbReference type="EC" id="2.-.-.-"/>
<dbReference type="EMBL" id="U18997">
    <property type="protein sequence ID" value="AAA57975.1"/>
    <property type="status" value="ALT_INIT"/>
    <property type="molecule type" value="Genomic_DNA"/>
</dbReference>
<dbReference type="EMBL" id="U00096">
    <property type="protein sequence ID" value="AAC76206.2"/>
    <property type="molecule type" value="Genomic_DNA"/>
</dbReference>
<dbReference type="EMBL" id="AP009048">
    <property type="protein sequence ID" value="BAE77218.1"/>
    <property type="molecule type" value="Genomic_DNA"/>
</dbReference>
<dbReference type="PIR" id="H65107">
    <property type="entry name" value="H65107"/>
</dbReference>
<dbReference type="RefSeq" id="NP_417641.4">
    <property type="nucleotide sequence ID" value="NC_000913.3"/>
</dbReference>
<dbReference type="RefSeq" id="WP_001333576.1">
    <property type="nucleotide sequence ID" value="NZ_LN832404.1"/>
</dbReference>
<dbReference type="SMR" id="P42640"/>
<dbReference type="BioGRID" id="4259423">
    <property type="interactions" value="23"/>
</dbReference>
<dbReference type="FunCoup" id="P42640">
    <property type="interactions" value="52"/>
</dbReference>
<dbReference type="STRING" id="511145.b3173"/>
<dbReference type="jPOST" id="P42640"/>
<dbReference type="PaxDb" id="511145-b3173"/>
<dbReference type="EnsemblBacteria" id="AAC76206">
    <property type="protein sequence ID" value="AAC76206"/>
    <property type="gene ID" value="b3173"/>
</dbReference>
<dbReference type="GeneID" id="947711"/>
<dbReference type="KEGG" id="ecj:JW5534"/>
<dbReference type="KEGG" id="eco:b3173"/>
<dbReference type="PATRIC" id="fig|511145.12.peg.3267"/>
<dbReference type="EchoBASE" id="EB2645"/>
<dbReference type="eggNOG" id="COG2194">
    <property type="taxonomic scope" value="Bacteria"/>
</dbReference>
<dbReference type="HOGENOM" id="CLU_039390_4_1_6"/>
<dbReference type="InParanoid" id="P42640"/>
<dbReference type="OMA" id="ARRANWG"/>
<dbReference type="OrthoDB" id="9786870at2"/>
<dbReference type="PhylomeDB" id="P42640"/>
<dbReference type="BioCyc" id="EcoCyc:G7655-MONOMER"/>
<dbReference type="PRO" id="PR:P42640"/>
<dbReference type="Proteomes" id="UP000000625">
    <property type="component" value="Chromosome"/>
</dbReference>
<dbReference type="GO" id="GO:0005886">
    <property type="term" value="C:plasma membrane"/>
    <property type="evidence" value="ECO:0000314"/>
    <property type="project" value="EcoCyc"/>
</dbReference>
<dbReference type="GO" id="GO:0016776">
    <property type="term" value="F:phosphotransferase activity, phosphate group as acceptor"/>
    <property type="evidence" value="ECO:0000318"/>
    <property type="project" value="GO_Central"/>
</dbReference>
<dbReference type="GO" id="GO:0009244">
    <property type="term" value="P:lipopolysaccharide core region biosynthetic process"/>
    <property type="evidence" value="ECO:0000318"/>
    <property type="project" value="GO_Central"/>
</dbReference>
<dbReference type="CDD" id="cd16017">
    <property type="entry name" value="LptA"/>
    <property type="match status" value="1"/>
</dbReference>
<dbReference type="FunFam" id="3.40.720.10:FF:000069">
    <property type="entry name" value="Phosphate starvation-inducible protein PsiE"/>
    <property type="match status" value="1"/>
</dbReference>
<dbReference type="Gene3D" id="3.40.720.10">
    <property type="entry name" value="Alkaline Phosphatase, subunit A"/>
    <property type="match status" value="1"/>
</dbReference>
<dbReference type="InterPro" id="IPR017850">
    <property type="entry name" value="Alkaline_phosphatase_core_sf"/>
</dbReference>
<dbReference type="InterPro" id="IPR040423">
    <property type="entry name" value="PEA_transferase"/>
</dbReference>
<dbReference type="InterPro" id="IPR000917">
    <property type="entry name" value="Sulfatase_N"/>
</dbReference>
<dbReference type="PANTHER" id="PTHR30443">
    <property type="entry name" value="INNER MEMBRANE PROTEIN"/>
    <property type="match status" value="1"/>
</dbReference>
<dbReference type="PANTHER" id="PTHR30443:SF4">
    <property type="entry name" value="PHOSPHOETHANOLAMINE TRANSFERASE OPGE-RELATED"/>
    <property type="match status" value="1"/>
</dbReference>
<dbReference type="Pfam" id="PF00884">
    <property type="entry name" value="Sulfatase"/>
    <property type="match status" value="1"/>
</dbReference>
<dbReference type="SUPFAM" id="SSF53649">
    <property type="entry name" value="Alkaline phosphatase-like"/>
    <property type="match status" value="1"/>
</dbReference>
<name>YHBX_ECOLI</name>
<comment type="function">
    <text evidence="1">Probably does not transfer phosphoethanolamine to lipid A.</text>
</comment>
<comment type="subcellular location">
    <subcellularLocation>
        <location evidence="3">Cell inner membrane</location>
        <topology evidence="5">Multi-pass membrane protein</topology>
    </subcellularLocation>
</comment>
<comment type="similarity">
    <text evidence="4">Belongs to the phosphoethanolamine transferase family.</text>
</comment>
<comment type="sequence caution" evidence="4">
    <conflict type="erroneous initiation">
        <sequence resource="EMBL-CDS" id="AAA57975"/>
    </conflict>
    <text>Extended N-terminus.</text>
</comment>
<reference key="1">
    <citation type="journal article" date="1997" name="Science">
        <title>The complete genome sequence of Escherichia coli K-12.</title>
        <authorList>
            <person name="Blattner F.R."/>
            <person name="Plunkett G. III"/>
            <person name="Bloch C.A."/>
            <person name="Perna N.T."/>
            <person name="Burland V."/>
            <person name="Riley M."/>
            <person name="Collado-Vides J."/>
            <person name="Glasner J.D."/>
            <person name="Rode C.K."/>
            <person name="Mayhew G.F."/>
            <person name="Gregor J."/>
            <person name="Davis N.W."/>
            <person name="Kirkpatrick H.A."/>
            <person name="Goeden M.A."/>
            <person name="Rose D.J."/>
            <person name="Mau B."/>
            <person name="Shao Y."/>
        </authorList>
    </citation>
    <scope>NUCLEOTIDE SEQUENCE [LARGE SCALE GENOMIC DNA]</scope>
    <source>
        <strain>K12 / MG1655 / ATCC 47076</strain>
    </source>
</reference>
<reference key="2">
    <citation type="journal article" date="2006" name="Mol. Syst. Biol.">
        <title>Highly accurate genome sequences of Escherichia coli K-12 strains MG1655 and W3110.</title>
        <authorList>
            <person name="Hayashi K."/>
            <person name="Morooka N."/>
            <person name="Yamamoto Y."/>
            <person name="Fujita K."/>
            <person name="Isono K."/>
            <person name="Choi S."/>
            <person name="Ohtsubo E."/>
            <person name="Baba T."/>
            <person name="Wanner B.L."/>
            <person name="Mori H."/>
            <person name="Horiuchi T."/>
        </authorList>
    </citation>
    <scope>NUCLEOTIDE SEQUENCE [LARGE SCALE GENOMIC DNA]</scope>
    <source>
        <strain>K12 / W3110 / ATCC 27325 / DSM 5911</strain>
    </source>
</reference>
<reference key="3">
    <citation type="journal article" date="2005" name="Science">
        <title>Global topology analysis of the Escherichia coli inner membrane proteome.</title>
        <authorList>
            <person name="Daley D.O."/>
            <person name="Rapp M."/>
            <person name="Granseth E."/>
            <person name="Melen K."/>
            <person name="Drew D."/>
            <person name="von Heijne G."/>
        </authorList>
    </citation>
    <scope>SUBCELLULAR LOCATION</scope>
    <scope>TOPOLOGY [LARGE SCALE ANALYSIS]</scope>
    <source>
        <strain>K12 / MG1655 / ATCC 47076</strain>
    </source>
</reference>
<keyword id="KW-0997">Cell inner membrane</keyword>
<keyword id="KW-1003">Cell membrane</keyword>
<keyword id="KW-0472">Membrane</keyword>
<keyword id="KW-1185">Reference proteome</keyword>
<keyword id="KW-0808">Transferase</keyword>
<keyword id="KW-0812">Transmembrane</keyword>
<keyword id="KW-1133">Transmembrane helix</keyword>
<protein>
    <recommendedName>
        <fullName>Putative transferase YhbX</fullName>
        <ecNumber>2.-.-.-</ecNumber>
    </recommendedName>
</protein>